<evidence type="ECO:0000255" key="1">
    <source>
        <dbReference type="HAMAP-Rule" id="MF_00583"/>
    </source>
</evidence>
<evidence type="ECO:0000269" key="2">
    <source ref="2"/>
</evidence>
<proteinExistence type="evidence at protein level"/>
<comment type="function">
    <text evidence="1">Involved in the biosynthesis of the central metabolite phospho-alpha-D-ribosyl-1-pyrophosphate (PRPP) via the transfer of pyrophosphoryl group from ATP to 1-hydroxyl of ribose-5-phosphate (Rib-5-P).</text>
</comment>
<comment type="catalytic activity">
    <reaction evidence="1">
        <text>D-ribose 5-phosphate + ATP = 5-phospho-alpha-D-ribose 1-diphosphate + AMP + H(+)</text>
        <dbReference type="Rhea" id="RHEA:15609"/>
        <dbReference type="ChEBI" id="CHEBI:15378"/>
        <dbReference type="ChEBI" id="CHEBI:30616"/>
        <dbReference type="ChEBI" id="CHEBI:58017"/>
        <dbReference type="ChEBI" id="CHEBI:78346"/>
        <dbReference type="ChEBI" id="CHEBI:456215"/>
        <dbReference type="EC" id="2.7.6.1"/>
    </reaction>
</comment>
<comment type="cofactor">
    <cofactor evidence="1">
        <name>Mg(2+)</name>
        <dbReference type="ChEBI" id="CHEBI:18420"/>
    </cofactor>
    <text evidence="1">Binds 1 Mg(2+) ion per subunit.</text>
</comment>
<comment type="pathway">
    <text evidence="1">Metabolic intermediate biosynthesis; 5-phospho-alpha-D-ribose 1-diphosphate biosynthesis; 5-phospho-alpha-D-ribose 1-diphosphate from D-ribose 5-phosphate (route I): step 1/1.</text>
</comment>
<comment type="subunit">
    <text evidence="1">Homohexamer.</text>
</comment>
<comment type="subcellular location">
    <subcellularLocation>
        <location evidence="1">Cytoplasm</location>
    </subcellularLocation>
</comment>
<comment type="mass spectrometry"/>
<comment type="similarity">
    <text evidence="1">Belongs to the ribose-phosphate pyrophosphokinase family. Class I subfamily.</text>
</comment>
<comment type="caution">
    <text evidence="1">Part of a set of proteins in which some residues (ACT_SITE, NP_BIND, REGION and BINDING) are not conserved.</text>
</comment>
<protein>
    <recommendedName>
        <fullName evidence="1">Putative ribose-phosphate pyrophosphokinase 2</fullName>
        <shortName evidence="1">RPPK 2</shortName>
        <ecNumber evidence="1">2.7.6.1</ecNumber>
    </recommendedName>
    <alternativeName>
        <fullName evidence="1">5-phospho-D-ribosyl alpha-1-diphosphate synthase 2</fullName>
    </alternativeName>
    <alternativeName>
        <fullName evidence="1">Phosphoribosyl diphosphate synthase 2</fullName>
    </alternativeName>
    <alternativeName>
        <fullName evidence="1">Phosphoribosyl pyrophosphate synthase 2</fullName>
        <shortName evidence="1">P-Rib-PP synthase 2</shortName>
        <shortName evidence="1">PRPP synthase 2</shortName>
        <shortName evidence="1">PRPPase 2</shortName>
    </alternativeName>
</protein>
<accession>Q5XC85</accession>
<accession>P82570</accession>
<name>KPRS2_STRP6</name>
<organism>
    <name type="scientific">Streptococcus pyogenes serotype M6 (strain ATCC BAA-946 / MGAS10394)</name>
    <dbReference type="NCBI Taxonomy" id="286636"/>
    <lineage>
        <taxon>Bacteria</taxon>
        <taxon>Bacillati</taxon>
        <taxon>Bacillota</taxon>
        <taxon>Bacilli</taxon>
        <taxon>Lactobacillales</taxon>
        <taxon>Streptococcaceae</taxon>
        <taxon>Streptococcus</taxon>
    </lineage>
</organism>
<reference key="1">
    <citation type="journal article" date="2004" name="J. Infect. Dis.">
        <title>Progress toward characterization of the group A Streptococcus metagenome: complete genome sequence of a macrolide-resistant serotype M6 strain.</title>
        <authorList>
            <person name="Banks D.J."/>
            <person name="Porcella S.F."/>
            <person name="Barbian K.D."/>
            <person name="Beres S.B."/>
            <person name="Philips L.E."/>
            <person name="Voyich J.M."/>
            <person name="DeLeo F.R."/>
            <person name="Martin J.M."/>
            <person name="Somerville G.A."/>
            <person name="Musser J.M."/>
        </authorList>
    </citation>
    <scope>NUCLEOTIDE SEQUENCE [LARGE SCALE GENOMIC DNA]</scope>
    <source>
        <strain>ATCC BAA-946 / MGAS10394</strain>
    </source>
</reference>
<reference key="2">
    <citation type="submission" date="2000-05" db="UniProtKB">
        <title>Two-dimensional gel electrophoresis map of Streptococcus pyogenes proteins.</title>
        <authorList>
            <person name="Hogan D.A."/>
            <person name="Du P."/>
            <person name="Stevenson T.I."/>
            <person name="Whitton M."/>
            <person name="Kilby G.W."/>
            <person name="Rogers J."/>
            <person name="VanBogelen R.A."/>
        </authorList>
    </citation>
    <scope>PROTEIN SEQUENCE OF 164-177; 220-232 AND 310-321</scope>
    <scope>MASS SPECTROMETRY</scope>
    <source>
        <strain>JRS4 / Serotype M6</strain>
    </source>
</reference>
<feature type="chain" id="PRO_0000141213" description="Putative ribose-phosphate pyrophosphokinase 2">
    <location>
        <begin position="1"/>
        <end position="326"/>
    </location>
</feature>
<feature type="binding site" evidence="1">
    <location>
        <begin position="43"/>
        <end position="45"/>
    </location>
    <ligand>
        <name>ATP</name>
        <dbReference type="ChEBI" id="CHEBI:30616"/>
    </ligand>
</feature>
<feature type="binding site" evidence="1">
    <location>
        <begin position="102"/>
        <end position="103"/>
    </location>
    <ligand>
        <name>ATP</name>
        <dbReference type="ChEBI" id="CHEBI:30616"/>
    </ligand>
</feature>
<feature type="binding site" evidence="1">
    <location>
        <position position="136"/>
    </location>
    <ligand>
        <name>Mg(2+)</name>
        <dbReference type="ChEBI" id="CHEBI:18420"/>
    </ligand>
</feature>
<feature type="binding site" evidence="1">
    <location>
        <position position="225"/>
    </location>
    <ligand>
        <name>D-ribose 5-phosphate</name>
        <dbReference type="ChEBI" id="CHEBI:78346"/>
    </ligand>
</feature>
<feature type="binding site" evidence="1">
    <location>
        <begin position="229"/>
        <end position="233"/>
    </location>
    <ligand>
        <name>D-ribose 5-phosphate</name>
        <dbReference type="ChEBI" id="CHEBI:78346"/>
    </ligand>
</feature>
<keyword id="KW-0067">ATP-binding</keyword>
<keyword id="KW-0963">Cytoplasm</keyword>
<keyword id="KW-0903">Direct protein sequencing</keyword>
<keyword id="KW-0418">Kinase</keyword>
<keyword id="KW-0460">Magnesium</keyword>
<keyword id="KW-0479">Metal-binding</keyword>
<keyword id="KW-0545">Nucleotide biosynthesis</keyword>
<keyword id="KW-0547">Nucleotide-binding</keyword>
<keyword id="KW-0808">Transferase</keyword>
<dbReference type="EC" id="2.7.6.1" evidence="1"/>
<dbReference type="EMBL" id="CP000003">
    <property type="protein sequence ID" value="AAT86978.1"/>
    <property type="molecule type" value="Genomic_DNA"/>
</dbReference>
<dbReference type="RefSeq" id="WP_002989827.1">
    <property type="nucleotide sequence ID" value="NC_006086.1"/>
</dbReference>
<dbReference type="SMR" id="Q5XC85"/>
<dbReference type="KEGG" id="spa:M6_Spy0843"/>
<dbReference type="HOGENOM" id="CLU_033546_2_0_9"/>
<dbReference type="UniPathway" id="UPA00087">
    <property type="reaction ID" value="UER00172"/>
</dbReference>
<dbReference type="Proteomes" id="UP000001167">
    <property type="component" value="Chromosome"/>
</dbReference>
<dbReference type="GO" id="GO:0005737">
    <property type="term" value="C:cytoplasm"/>
    <property type="evidence" value="ECO:0007669"/>
    <property type="project" value="UniProtKB-SubCell"/>
</dbReference>
<dbReference type="GO" id="GO:0002189">
    <property type="term" value="C:ribose phosphate diphosphokinase complex"/>
    <property type="evidence" value="ECO:0007669"/>
    <property type="project" value="TreeGrafter"/>
</dbReference>
<dbReference type="GO" id="GO:0005524">
    <property type="term" value="F:ATP binding"/>
    <property type="evidence" value="ECO:0007669"/>
    <property type="project" value="UniProtKB-KW"/>
</dbReference>
<dbReference type="GO" id="GO:0016301">
    <property type="term" value="F:kinase activity"/>
    <property type="evidence" value="ECO:0007669"/>
    <property type="project" value="UniProtKB-KW"/>
</dbReference>
<dbReference type="GO" id="GO:0000287">
    <property type="term" value="F:magnesium ion binding"/>
    <property type="evidence" value="ECO:0007669"/>
    <property type="project" value="UniProtKB-UniRule"/>
</dbReference>
<dbReference type="GO" id="GO:0004749">
    <property type="term" value="F:ribose phosphate diphosphokinase activity"/>
    <property type="evidence" value="ECO:0007669"/>
    <property type="project" value="UniProtKB-UniRule"/>
</dbReference>
<dbReference type="GO" id="GO:0006015">
    <property type="term" value="P:5-phosphoribose 1-diphosphate biosynthetic process"/>
    <property type="evidence" value="ECO:0007669"/>
    <property type="project" value="UniProtKB-UniRule"/>
</dbReference>
<dbReference type="GO" id="GO:0006164">
    <property type="term" value="P:purine nucleotide biosynthetic process"/>
    <property type="evidence" value="ECO:0007669"/>
    <property type="project" value="TreeGrafter"/>
</dbReference>
<dbReference type="GO" id="GO:0009156">
    <property type="term" value="P:ribonucleoside monophosphate biosynthetic process"/>
    <property type="evidence" value="ECO:0007669"/>
    <property type="project" value="InterPro"/>
</dbReference>
<dbReference type="CDD" id="cd06223">
    <property type="entry name" value="PRTases_typeI"/>
    <property type="match status" value="1"/>
</dbReference>
<dbReference type="FunFam" id="3.40.50.2020:FF:000001">
    <property type="entry name" value="Ribose-phosphate pyrophosphokinase"/>
    <property type="match status" value="1"/>
</dbReference>
<dbReference type="Gene3D" id="3.40.50.2020">
    <property type="match status" value="2"/>
</dbReference>
<dbReference type="HAMAP" id="MF_00583_B">
    <property type="entry name" value="RibP_PPkinase_B"/>
    <property type="match status" value="1"/>
</dbReference>
<dbReference type="InterPro" id="IPR000842">
    <property type="entry name" value="PRib_PP_synth_CS"/>
</dbReference>
<dbReference type="InterPro" id="IPR029099">
    <property type="entry name" value="Pribosyltran_N"/>
</dbReference>
<dbReference type="InterPro" id="IPR000836">
    <property type="entry name" value="PRibTrfase_dom"/>
</dbReference>
<dbReference type="InterPro" id="IPR029057">
    <property type="entry name" value="PRTase-like"/>
</dbReference>
<dbReference type="InterPro" id="IPR005946">
    <property type="entry name" value="Rib-P_diPkinase"/>
</dbReference>
<dbReference type="InterPro" id="IPR037515">
    <property type="entry name" value="Rib-P_diPkinase_bac"/>
</dbReference>
<dbReference type="NCBIfam" id="NF002320">
    <property type="entry name" value="PRK01259.1"/>
    <property type="match status" value="1"/>
</dbReference>
<dbReference type="NCBIfam" id="NF002686">
    <property type="entry name" value="PRK02458.1"/>
    <property type="match status" value="1"/>
</dbReference>
<dbReference type="NCBIfam" id="TIGR01251">
    <property type="entry name" value="ribP_PPkin"/>
    <property type="match status" value="1"/>
</dbReference>
<dbReference type="PANTHER" id="PTHR10210">
    <property type="entry name" value="RIBOSE-PHOSPHATE DIPHOSPHOKINASE FAMILY MEMBER"/>
    <property type="match status" value="1"/>
</dbReference>
<dbReference type="PANTHER" id="PTHR10210:SF41">
    <property type="entry name" value="RIBOSE-PHOSPHATE PYROPHOSPHOKINASE 1, CHLOROPLASTIC"/>
    <property type="match status" value="1"/>
</dbReference>
<dbReference type="Pfam" id="PF14572">
    <property type="entry name" value="Pribosyl_synth"/>
    <property type="match status" value="1"/>
</dbReference>
<dbReference type="Pfam" id="PF13793">
    <property type="entry name" value="Pribosyltran_N"/>
    <property type="match status" value="1"/>
</dbReference>
<dbReference type="SMART" id="SM01400">
    <property type="entry name" value="Pribosyltran_N"/>
    <property type="match status" value="1"/>
</dbReference>
<dbReference type="SUPFAM" id="SSF53271">
    <property type="entry name" value="PRTase-like"/>
    <property type="match status" value="2"/>
</dbReference>
<dbReference type="PROSITE" id="PS00114">
    <property type="entry name" value="PRPP_SYNTHASE"/>
    <property type="match status" value="1"/>
</dbReference>
<sequence>MTERYADKQIKLFSLTSNLPIAEKIAKAAGIPLGKMSSRQFSDGEIMINIEETVRGDDIYIIQSTSFPVNDNLWELLIMIDACKRASANTVNIVLPYFGYSRQDRVAKPREPITAKLVANMLTKAGIDRVVTLDLHAVQVQGFFDIPVDNLFTVPLFAERYSKLGLSGSDVVVVSPKNSGIKRARSLAEYLDSPIAIIDYAQDDSEREQGYIIGDVSGKKAILIDDILNTGKTFAEAAKILERSGATDTYAVASHGLFAGGAAEVLETAPIKEIIVTDSVKTKNRVPENVTYLSASDLIAEAIIRIHERRPLSPLFSYQPKGKNNA</sequence>
<gene>
    <name evidence="1" type="primary">prs2</name>
    <name type="ordered locus">M6_Spy0843</name>
</gene>